<dbReference type="EC" id="7.1.1.9"/>
<dbReference type="EMBL" id="X79547">
    <property type="protein sequence ID" value="CAA56085.1"/>
    <property type="molecule type" value="Genomic_DNA"/>
</dbReference>
<dbReference type="PIR" id="T11863">
    <property type="entry name" value="T11863"/>
</dbReference>
<dbReference type="RefSeq" id="NP_007166.1">
    <property type="nucleotide sequence ID" value="NC_001640.1"/>
</dbReference>
<dbReference type="SMR" id="P48661"/>
<dbReference type="FunCoup" id="P48661">
    <property type="interactions" value="147"/>
</dbReference>
<dbReference type="STRING" id="9796.ENSECAP00000023112"/>
<dbReference type="PaxDb" id="9796-ENSECAP00000023112"/>
<dbReference type="Ensembl" id="ENSECAT00000029868.1">
    <property type="protein sequence ID" value="ENSECAP00000023112.1"/>
    <property type="gene ID" value="ENSECAG00000027672.1"/>
</dbReference>
<dbReference type="KEGG" id="ecb:807856"/>
<dbReference type="VGNC" id="VGNC:59021">
    <property type="gene designation" value="MT-CO3"/>
</dbReference>
<dbReference type="GeneTree" id="ENSGT00390000013064"/>
<dbReference type="HOGENOM" id="CLU_044071_0_0_1"/>
<dbReference type="InParanoid" id="P48661"/>
<dbReference type="OMA" id="SIYWWGS"/>
<dbReference type="OrthoDB" id="10050457at2759"/>
<dbReference type="Proteomes" id="UP000002281">
    <property type="component" value="Mitochondrion"/>
</dbReference>
<dbReference type="Bgee" id="ENSECAG00000027672">
    <property type="expression patterns" value="Expressed in triceps brachii and 23 other cell types or tissues"/>
</dbReference>
<dbReference type="GO" id="GO:0005743">
    <property type="term" value="C:mitochondrial inner membrane"/>
    <property type="evidence" value="ECO:0007669"/>
    <property type="project" value="UniProtKB-SubCell"/>
</dbReference>
<dbReference type="GO" id="GO:0005739">
    <property type="term" value="C:mitochondrion"/>
    <property type="evidence" value="ECO:0000318"/>
    <property type="project" value="GO_Central"/>
</dbReference>
<dbReference type="GO" id="GO:0045277">
    <property type="term" value="C:respiratory chain complex IV"/>
    <property type="evidence" value="ECO:0000250"/>
    <property type="project" value="UniProtKB"/>
</dbReference>
<dbReference type="GO" id="GO:0004129">
    <property type="term" value="F:cytochrome-c oxidase activity"/>
    <property type="evidence" value="ECO:0007669"/>
    <property type="project" value="UniProtKB-EC"/>
</dbReference>
<dbReference type="GO" id="GO:0006123">
    <property type="term" value="P:mitochondrial electron transport, cytochrome c to oxygen"/>
    <property type="evidence" value="ECO:0000318"/>
    <property type="project" value="GO_Central"/>
</dbReference>
<dbReference type="GO" id="GO:0008535">
    <property type="term" value="P:respiratory chain complex IV assembly"/>
    <property type="evidence" value="ECO:0000250"/>
    <property type="project" value="UniProtKB"/>
</dbReference>
<dbReference type="CDD" id="cd01665">
    <property type="entry name" value="Cyt_c_Oxidase_III"/>
    <property type="match status" value="1"/>
</dbReference>
<dbReference type="FunFam" id="1.10.287.70:FF:000048">
    <property type="entry name" value="Cytochrome c oxidase subunit 3"/>
    <property type="match status" value="1"/>
</dbReference>
<dbReference type="FunFam" id="1.20.120.80:FF:000002">
    <property type="entry name" value="Cytochrome c oxidase subunit 3"/>
    <property type="match status" value="1"/>
</dbReference>
<dbReference type="Gene3D" id="1.10.287.70">
    <property type="match status" value="1"/>
</dbReference>
<dbReference type="Gene3D" id="1.20.120.80">
    <property type="entry name" value="Cytochrome c oxidase, subunit III, four-helix bundle"/>
    <property type="match status" value="1"/>
</dbReference>
<dbReference type="InterPro" id="IPR024791">
    <property type="entry name" value="Cyt_c/ubiquinol_Oxase_su3"/>
</dbReference>
<dbReference type="InterPro" id="IPR033945">
    <property type="entry name" value="Cyt_c_oxase_su3_dom"/>
</dbReference>
<dbReference type="InterPro" id="IPR000298">
    <property type="entry name" value="Cyt_c_oxidase-like_su3"/>
</dbReference>
<dbReference type="InterPro" id="IPR035973">
    <property type="entry name" value="Cyt_c_oxidase_su3-like_sf"/>
</dbReference>
<dbReference type="InterPro" id="IPR013833">
    <property type="entry name" value="Cyt_c_oxidase_su3_a-hlx"/>
</dbReference>
<dbReference type="PANTHER" id="PTHR11403:SF7">
    <property type="entry name" value="CYTOCHROME C OXIDASE SUBUNIT 3"/>
    <property type="match status" value="1"/>
</dbReference>
<dbReference type="PANTHER" id="PTHR11403">
    <property type="entry name" value="CYTOCHROME C OXIDASE SUBUNIT III"/>
    <property type="match status" value="1"/>
</dbReference>
<dbReference type="Pfam" id="PF00510">
    <property type="entry name" value="COX3"/>
    <property type="match status" value="1"/>
</dbReference>
<dbReference type="SUPFAM" id="SSF81452">
    <property type="entry name" value="Cytochrome c oxidase subunit III-like"/>
    <property type="match status" value="1"/>
</dbReference>
<dbReference type="PROSITE" id="PS50253">
    <property type="entry name" value="COX3"/>
    <property type="match status" value="1"/>
</dbReference>
<accession>P48661</accession>
<evidence type="ECO:0000250" key="1">
    <source>
        <dbReference type="UniProtKB" id="P00415"/>
    </source>
</evidence>
<evidence type="ECO:0000250" key="2">
    <source>
        <dbReference type="UniProtKB" id="P00420"/>
    </source>
</evidence>
<evidence type="ECO:0000305" key="3"/>
<evidence type="ECO:0000312" key="4">
    <source>
        <dbReference type="Proteomes" id="UP000002281"/>
    </source>
</evidence>
<sequence>MTHQTHAYHMVNPSPWPLTGALSALLMTSGLAMWFHFNSTLLLAMGLLTNILTMYQWWRDIIRESTFQGHHTSIVQKGLRYGMILFIISEVFFFSGFFWAFYHSSLAPTPELGGCWPPTGIHPLNPLEVPLLNTSVLLASGVSITWAHHSLMEGNRKNMLQGLFITISLGVYFTLLQASEYYEASFTISDGVYGSTFFVATGFHGLHVIIGSTFLIVCFLRQLKFHFTSSHHFGFEAAAWYWHFVDVVWLFLYVSIYWWGS</sequence>
<reference key="1">
    <citation type="journal article" date="1994" name="Gene">
        <title>The complete mitochondrial DNA sequence of the horse, Equus caballus: extensive heteroplasmy of the control region.</title>
        <authorList>
            <person name="Xu X."/>
            <person name="Arnason U."/>
        </authorList>
    </citation>
    <scope>NUCLEOTIDE SEQUENCE [LARGE SCALE GENOMIC DNA]</scope>
    <source>
        <strain evidence="4">Thoroughbred</strain>
    </source>
</reference>
<geneLocation type="mitochondrion"/>
<keyword id="KW-0472">Membrane</keyword>
<keyword id="KW-0496">Mitochondrion</keyword>
<keyword id="KW-0999">Mitochondrion inner membrane</keyword>
<keyword id="KW-1185">Reference proteome</keyword>
<keyword id="KW-1278">Translocase</keyword>
<keyword id="KW-0812">Transmembrane</keyword>
<keyword id="KW-1133">Transmembrane helix</keyword>
<comment type="function">
    <text evidence="2">Component of the cytochrome c oxidase, the last enzyme in the mitochondrial electron transport chain which drives oxidative phosphorylation. The respiratory chain contains 3 multisubunit complexes succinate dehydrogenase (complex II, CII), ubiquinol-cytochrome c oxidoreductase (cytochrome b-c1 complex, complex III, CIII) and cytochrome c oxidase (complex IV, CIV), that cooperate to transfer electrons derived from NADH and succinate to molecular oxygen, creating an electrochemical gradient over the inner membrane that drives transmembrane transport and the ATP synthase. Cytochrome c oxidase is the component of the respiratory chain that catalyzes the reduction of oxygen to water. Electrons originating from reduced cytochrome c in the intermembrane space (IMS) are transferred via the dinuclear copper A center (CU(A)) of subunit 2 and heme A of subunit 1 to the active site in subunit 1, a binuclear center (BNC) formed by heme A3 and copper B (CU(B)). The BNC reduces molecular oxygen to 2 water molecules using 4 electrons from cytochrome c in the IMS and 4 protons from the mitochondrial matrix.</text>
</comment>
<comment type="catalytic activity">
    <reaction evidence="2">
        <text>4 Fe(II)-[cytochrome c] + O2 + 8 H(+)(in) = 4 Fe(III)-[cytochrome c] + 2 H2O + 4 H(+)(out)</text>
        <dbReference type="Rhea" id="RHEA:11436"/>
        <dbReference type="Rhea" id="RHEA-COMP:10350"/>
        <dbReference type="Rhea" id="RHEA-COMP:14399"/>
        <dbReference type="ChEBI" id="CHEBI:15377"/>
        <dbReference type="ChEBI" id="CHEBI:15378"/>
        <dbReference type="ChEBI" id="CHEBI:15379"/>
        <dbReference type="ChEBI" id="CHEBI:29033"/>
        <dbReference type="ChEBI" id="CHEBI:29034"/>
        <dbReference type="EC" id="7.1.1.9"/>
    </reaction>
    <physiologicalReaction direction="left-to-right" evidence="2">
        <dbReference type="Rhea" id="RHEA:11437"/>
    </physiologicalReaction>
</comment>
<comment type="subunit">
    <text evidence="1">Component of the cytochrome c oxidase (complex IV, CIV), a multisubunit enzyme composed of 14 subunits. The complex is composed of a catalytic core of 3 subunits MT-CO1, MT-CO2 and MT-CO3, encoded in the mitochondrial DNA, and 11 supernumerary subunits COX4I, COX5A, COX5B, COX6A, COX6B, COX6C, COX7A, COX7B, COX7C, COX8 and NDUFA4, which are encoded in the nuclear genome. The complex exists as a monomer or a dimer and forms supercomplexes (SCs) in the inner mitochondrial membrane with NADH-ubiquinone oxidoreductase (complex I, CI) and ubiquinol-cytochrome c oxidoreductase (cytochrome b-c1 complex, complex III, CIII), resulting in different assemblies (supercomplex SCI(1)III(2)IV(1) and megacomplex MCI(2)III(2)IV(2)).</text>
</comment>
<comment type="subcellular location">
    <subcellularLocation>
        <location evidence="1">Mitochondrion inner membrane</location>
        <topology evidence="1">Multi-pass membrane protein</topology>
    </subcellularLocation>
</comment>
<comment type="similarity">
    <text evidence="3">Belongs to the cytochrome c oxidase subunit 3 family.</text>
</comment>
<feature type="chain" id="PRO_0000183792" description="Cytochrome c oxidase subunit 3">
    <location>
        <begin position="1"/>
        <end position="261"/>
    </location>
</feature>
<feature type="topological domain" description="Mitochondrial matrix" evidence="1">
    <location>
        <begin position="1"/>
        <end position="15"/>
    </location>
</feature>
<feature type="transmembrane region" description="Helical; Name=I" evidence="1">
    <location>
        <begin position="16"/>
        <end position="34"/>
    </location>
</feature>
<feature type="topological domain" description="Mitochondrial intermembrane" evidence="1">
    <location>
        <begin position="35"/>
        <end position="40"/>
    </location>
</feature>
<feature type="transmembrane region" description="Helical; Name=II" evidence="1">
    <location>
        <begin position="41"/>
        <end position="66"/>
    </location>
</feature>
<feature type="topological domain" description="Mitochondrial matrix" evidence="1">
    <location>
        <begin position="67"/>
        <end position="72"/>
    </location>
</feature>
<feature type="transmembrane region" description="Helical; Name=III" evidence="1">
    <location>
        <begin position="73"/>
        <end position="105"/>
    </location>
</feature>
<feature type="topological domain" description="Mitochondrial intermembrane" evidence="1">
    <location>
        <begin position="106"/>
        <end position="128"/>
    </location>
</feature>
<feature type="transmembrane region" description="Helical; Name=IV" evidence="1">
    <location>
        <begin position="129"/>
        <end position="152"/>
    </location>
</feature>
<feature type="topological domain" description="Mitochondrial matrix" evidence="1">
    <location>
        <begin position="153"/>
        <end position="155"/>
    </location>
</feature>
<feature type="transmembrane region" description="Helical; Name=V" evidence="1">
    <location>
        <begin position="156"/>
        <end position="183"/>
    </location>
</feature>
<feature type="topological domain" description="Mitochondrial intermembrane" evidence="1">
    <location>
        <begin position="184"/>
        <end position="190"/>
    </location>
</feature>
<feature type="transmembrane region" description="Helical; Name=VI" evidence="1">
    <location>
        <begin position="191"/>
        <end position="223"/>
    </location>
</feature>
<feature type="topological domain" description="Mitochondrial matrix" evidence="1">
    <location>
        <begin position="224"/>
        <end position="232"/>
    </location>
</feature>
<feature type="transmembrane region" description="Helical; Name=VII" evidence="1">
    <location>
        <begin position="233"/>
        <end position="256"/>
    </location>
</feature>
<feature type="topological domain" description="Mitochondrial intermembrane" evidence="1">
    <location>
        <begin position="257"/>
        <end position="261"/>
    </location>
</feature>
<proteinExistence type="inferred from homology"/>
<name>COX3_HORSE</name>
<gene>
    <name type="primary">MT-CO3</name>
    <name type="synonym">COIII</name>
    <name type="synonym">COXIII</name>
    <name type="synonym">MTCO3</name>
</gene>
<organism>
    <name type="scientific">Equus caballus</name>
    <name type="common">Horse</name>
    <dbReference type="NCBI Taxonomy" id="9796"/>
    <lineage>
        <taxon>Eukaryota</taxon>
        <taxon>Metazoa</taxon>
        <taxon>Chordata</taxon>
        <taxon>Craniata</taxon>
        <taxon>Vertebrata</taxon>
        <taxon>Euteleostomi</taxon>
        <taxon>Mammalia</taxon>
        <taxon>Eutheria</taxon>
        <taxon>Laurasiatheria</taxon>
        <taxon>Perissodactyla</taxon>
        <taxon>Equidae</taxon>
        <taxon>Equus</taxon>
    </lineage>
</organism>
<protein>
    <recommendedName>
        <fullName>Cytochrome c oxidase subunit 3</fullName>
        <ecNumber>7.1.1.9</ecNumber>
    </recommendedName>
    <alternativeName>
        <fullName>Cytochrome c oxidase polypeptide III</fullName>
    </alternativeName>
</protein>